<comment type="function">
    <text evidence="1">Catalyzes the transfer of the phosphoribosyl group of 5-phosphorylribose-1-pyrophosphate (PRPP) to anthranilate to yield N-(5'-phosphoribosyl)-anthranilate (PRA).</text>
</comment>
<comment type="catalytic activity">
    <reaction evidence="1">
        <text>N-(5-phospho-beta-D-ribosyl)anthranilate + diphosphate = 5-phospho-alpha-D-ribose 1-diphosphate + anthranilate</text>
        <dbReference type="Rhea" id="RHEA:11768"/>
        <dbReference type="ChEBI" id="CHEBI:16567"/>
        <dbReference type="ChEBI" id="CHEBI:18277"/>
        <dbReference type="ChEBI" id="CHEBI:33019"/>
        <dbReference type="ChEBI" id="CHEBI:58017"/>
        <dbReference type="EC" id="2.4.2.18"/>
    </reaction>
</comment>
<comment type="cofactor">
    <cofactor evidence="1">
        <name>Mg(2+)</name>
        <dbReference type="ChEBI" id="CHEBI:18420"/>
    </cofactor>
    <text evidence="1">Binds 2 magnesium ions per monomer.</text>
</comment>
<comment type="pathway">
    <text evidence="1">Amino-acid biosynthesis; L-tryptophan biosynthesis; L-tryptophan from chorismate: step 2/5.</text>
</comment>
<comment type="subunit">
    <text evidence="1">Homodimer.</text>
</comment>
<comment type="similarity">
    <text evidence="1">Belongs to the anthranilate phosphoribosyltransferase family.</text>
</comment>
<gene>
    <name evidence="1" type="primary">trpD</name>
    <name type="ordered locus">M164_1313</name>
</gene>
<sequence>MNINDILKKLINKSDLEIDEAEELAKAIIRGEVPEILVSAILVALRMKGESKNEIVGFARAMRELAIKIDVPNAIDTAGTGGDGLGTVNVSTASAILLSLINPVAKHGNRAVSGKSGSADVLEALGYNIIVPPERAKELVHKTNFVFLFAQYYHPAMKNVANVRKTLGIRTIFNILGPLTNPANAKYQLMGVFSKDHLDLLSKSAYELDFNKVILVHGEPGIDEVSPIGKTFMKIVSKRGIEEVKFDVTDFGISSIPIDKLIVNSAEDSAIKIVRAFLGKDEHVAEFIKINTAVALFALDKVSDFKEGYEYAKYLIENSVNKLNEIISLNGDLTKLKTIMVKSSG</sequence>
<protein>
    <recommendedName>
        <fullName evidence="1">Anthranilate phosphoribosyltransferase</fullName>
        <ecNumber evidence="1">2.4.2.18</ecNumber>
    </recommendedName>
</protein>
<evidence type="ECO:0000255" key="1">
    <source>
        <dbReference type="HAMAP-Rule" id="MF_00211"/>
    </source>
</evidence>
<accession>C4KH54</accession>
<name>TRPD_SACI6</name>
<dbReference type="EC" id="2.4.2.18" evidence="1"/>
<dbReference type="EMBL" id="CP001402">
    <property type="protein sequence ID" value="ACR41918.1"/>
    <property type="molecule type" value="Genomic_DNA"/>
</dbReference>
<dbReference type="RefSeq" id="WP_012711335.1">
    <property type="nucleotide sequence ID" value="NC_012726.1"/>
</dbReference>
<dbReference type="SMR" id="C4KH54"/>
<dbReference type="GeneID" id="84061639"/>
<dbReference type="KEGG" id="sid:M164_1313"/>
<dbReference type="HOGENOM" id="CLU_034315_2_1_2"/>
<dbReference type="UniPathway" id="UPA00035">
    <property type="reaction ID" value="UER00041"/>
</dbReference>
<dbReference type="Proteomes" id="UP000001479">
    <property type="component" value="Chromosome"/>
</dbReference>
<dbReference type="GO" id="GO:0005829">
    <property type="term" value="C:cytosol"/>
    <property type="evidence" value="ECO:0007669"/>
    <property type="project" value="TreeGrafter"/>
</dbReference>
<dbReference type="GO" id="GO:0004048">
    <property type="term" value="F:anthranilate phosphoribosyltransferase activity"/>
    <property type="evidence" value="ECO:0007669"/>
    <property type="project" value="UniProtKB-UniRule"/>
</dbReference>
<dbReference type="GO" id="GO:0000287">
    <property type="term" value="F:magnesium ion binding"/>
    <property type="evidence" value="ECO:0007669"/>
    <property type="project" value="UniProtKB-UniRule"/>
</dbReference>
<dbReference type="GO" id="GO:0000162">
    <property type="term" value="P:L-tryptophan biosynthetic process"/>
    <property type="evidence" value="ECO:0007669"/>
    <property type="project" value="UniProtKB-UniRule"/>
</dbReference>
<dbReference type="FunFam" id="3.40.1030.10:FF:000002">
    <property type="entry name" value="Anthranilate phosphoribosyltransferase"/>
    <property type="match status" value="1"/>
</dbReference>
<dbReference type="Gene3D" id="3.40.1030.10">
    <property type="entry name" value="Nucleoside phosphorylase/phosphoribosyltransferase catalytic domain"/>
    <property type="match status" value="1"/>
</dbReference>
<dbReference type="Gene3D" id="1.20.970.10">
    <property type="entry name" value="Transferase, Pyrimidine Nucleoside Phosphorylase, Chain C"/>
    <property type="match status" value="1"/>
</dbReference>
<dbReference type="HAMAP" id="MF_00211">
    <property type="entry name" value="TrpD"/>
    <property type="match status" value="1"/>
</dbReference>
<dbReference type="InterPro" id="IPR005940">
    <property type="entry name" value="Anthranilate_Pribosyl_Tfrase"/>
</dbReference>
<dbReference type="InterPro" id="IPR000312">
    <property type="entry name" value="Glycosyl_Trfase_fam3"/>
</dbReference>
<dbReference type="InterPro" id="IPR017459">
    <property type="entry name" value="Glycosyl_Trfase_fam3_N_dom"/>
</dbReference>
<dbReference type="InterPro" id="IPR036320">
    <property type="entry name" value="Glycosyl_Trfase_fam3_N_dom_sf"/>
</dbReference>
<dbReference type="InterPro" id="IPR035902">
    <property type="entry name" value="Nuc_phospho_transferase"/>
</dbReference>
<dbReference type="NCBIfam" id="TIGR01245">
    <property type="entry name" value="trpD"/>
    <property type="match status" value="1"/>
</dbReference>
<dbReference type="PANTHER" id="PTHR43285">
    <property type="entry name" value="ANTHRANILATE PHOSPHORIBOSYLTRANSFERASE"/>
    <property type="match status" value="1"/>
</dbReference>
<dbReference type="PANTHER" id="PTHR43285:SF2">
    <property type="entry name" value="ANTHRANILATE PHOSPHORIBOSYLTRANSFERASE"/>
    <property type="match status" value="1"/>
</dbReference>
<dbReference type="Pfam" id="PF02885">
    <property type="entry name" value="Glycos_trans_3N"/>
    <property type="match status" value="1"/>
</dbReference>
<dbReference type="Pfam" id="PF00591">
    <property type="entry name" value="Glycos_transf_3"/>
    <property type="match status" value="1"/>
</dbReference>
<dbReference type="SUPFAM" id="SSF52418">
    <property type="entry name" value="Nucleoside phosphorylase/phosphoribosyltransferase catalytic domain"/>
    <property type="match status" value="1"/>
</dbReference>
<dbReference type="SUPFAM" id="SSF47648">
    <property type="entry name" value="Nucleoside phosphorylase/phosphoribosyltransferase N-terminal domain"/>
    <property type="match status" value="1"/>
</dbReference>
<keyword id="KW-0028">Amino-acid biosynthesis</keyword>
<keyword id="KW-0057">Aromatic amino acid biosynthesis</keyword>
<keyword id="KW-0328">Glycosyltransferase</keyword>
<keyword id="KW-0460">Magnesium</keyword>
<keyword id="KW-0479">Metal-binding</keyword>
<keyword id="KW-0808">Transferase</keyword>
<keyword id="KW-0822">Tryptophan biosynthesis</keyword>
<proteinExistence type="inferred from homology"/>
<reference key="1">
    <citation type="journal article" date="2009" name="Proc. Natl. Acad. Sci. U.S.A.">
        <title>Biogeography of the Sulfolobus islandicus pan-genome.</title>
        <authorList>
            <person name="Reno M.L."/>
            <person name="Held N.L."/>
            <person name="Fields C.J."/>
            <person name="Burke P.V."/>
            <person name="Whitaker R.J."/>
        </authorList>
    </citation>
    <scope>NUCLEOTIDE SEQUENCE [LARGE SCALE GENOMIC DNA]</scope>
    <source>
        <strain>M.16.4 / Kamchatka #3</strain>
    </source>
</reference>
<feature type="chain" id="PRO_1000204190" description="Anthranilate phosphoribosyltransferase">
    <location>
        <begin position="1"/>
        <end position="345"/>
    </location>
</feature>
<feature type="binding site" evidence="1">
    <location>
        <position position="79"/>
    </location>
    <ligand>
        <name>5-phospho-alpha-D-ribose 1-diphosphate</name>
        <dbReference type="ChEBI" id="CHEBI:58017"/>
    </ligand>
</feature>
<feature type="binding site" evidence="1">
    <location>
        <position position="79"/>
    </location>
    <ligand>
        <name>anthranilate</name>
        <dbReference type="ChEBI" id="CHEBI:16567"/>
        <label>1</label>
    </ligand>
</feature>
<feature type="binding site" evidence="1">
    <location>
        <begin position="82"/>
        <end position="83"/>
    </location>
    <ligand>
        <name>5-phospho-alpha-D-ribose 1-diphosphate</name>
        <dbReference type="ChEBI" id="CHEBI:58017"/>
    </ligand>
</feature>
<feature type="binding site" evidence="1">
    <location>
        <position position="87"/>
    </location>
    <ligand>
        <name>5-phospho-alpha-D-ribose 1-diphosphate</name>
        <dbReference type="ChEBI" id="CHEBI:58017"/>
    </ligand>
</feature>
<feature type="binding site" evidence="1">
    <location>
        <begin position="89"/>
        <end position="92"/>
    </location>
    <ligand>
        <name>5-phospho-alpha-D-ribose 1-diphosphate</name>
        <dbReference type="ChEBI" id="CHEBI:58017"/>
    </ligand>
</feature>
<feature type="binding site" evidence="1">
    <location>
        <position position="91"/>
    </location>
    <ligand>
        <name>Mg(2+)</name>
        <dbReference type="ChEBI" id="CHEBI:18420"/>
        <label>1</label>
    </ligand>
</feature>
<feature type="binding site" evidence="1">
    <location>
        <begin position="106"/>
        <end position="114"/>
    </location>
    <ligand>
        <name>5-phospho-alpha-D-ribose 1-diphosphate</name>
        <dbReference type="ChEBI" id="CHEBI:58017"/>
    </ligand>
</feature>
<feature type="binding site" evidence="1">
    <location>
        <position position="109"/>
    </location>
    <ligand>
        <name>anthranilate</name>
        <dbReference type="ChEBI" id="CHEBI:16567"/>
        <label>1</label>
    </ligand>
</feature>
<feature type="binding site" evidence="1">
    <location>
        <position position="118"/>
    </location>
    <ligand>
        <name>5-phospho-alpha-D-ribose 1-diphosphate</name>
        <dbReference type="ChEBI" id="CHEBI:58017"/>
    </ligand>
</feature>
<feature type="binding site" evidence="1">
    <location>
        <position position="164"/>
    </location>
    <ligand>
        <name>anthranilate</name>
        <dbReference type="ChEBI" id="CHEBI:16567"/>
        <label>2</label>
    </ligand>
</feature>
<feature type="binding site" evidence="1">
    <location>
        <position position="223"/>
    </location>
    <ligand>
        <name>Mg(2+)</name>
        <dbReference type="ChEBI" id="CHEBI:18420"/>
        <label>2</label>
    </ligand>
</feature>
<feature type="binding site" evidence="1">
    <location>
        <position position="224"/>
    </location>
    <ligand>
        <name>Mg(2+)</name>
        <dbReference type="ChEBI" id="CHEBI:18420"/>
        <label>1</label>
    </ligand>
</feature>
<feature type="binding site" evidence="1">
    <location>
        <position position="224"/>
    </location>
    <ligand>
        <name>Mg(2+)</name>
        <dbReference type="ChEBI" id="CHEBI:18420"/>
        <label>2</label>
    </ligand>
</feature>
<organism>
    <name type="scientific">Saccharolobus islandicus (strain M.16.4 / Kamchatka #3)</name>
    <name type="common">Sulfolobus islandicus</name>
    <dbReference type="NCBI Taxonomy" id="426118"/>
    <lineage>
        <taxon>Archaea</taxon>
        <taxon>Thermoproteota</taxon>
        <taxon>Thermoprotei</taxon>
        <taxon>Sulfolobales</taxon>
        <taxon>Sulfolobaceae</taxon>
        <taxon>Saccharolobus</taxon>
    </lineage>
</organism>